<reference key="1">
    <citation type="journal article" date="2006" name="J. Bacteriol.">
        <title>Comparison of the genome sequence of the poultry pathogen Bordetella avium with those of B. bronchiseptica, B. pertussis, and B. parapertussis reveals extensive diversity in surface structures associated with host interaction.</title>
        <authorList>
            <person name="Sebaihia M."/>
            <person name="Preston A."/>
            <person name="Maskell D.J."/>
            <person name="Kuzmiak H."/>
            <person name="Connell T.D."/>
            <person name="King N.D."/>
            <person name="Orndorff P.E."/>
            <person name="Miyamoto D.M."/>
            <person name="Thomson N.R."/>
            <person name="Harris D."/>
            <person name="Goble A."/>
            <person name="Lord A."/>
            <person name="Murphy L."/>
            <person name="Quail M.A."/>
            <person name="Rutter S."/>
            <person name="Squares R."/>
            <person name="Squares S."/>
            <person name="Woodward J."/>
            <person name="Parkhill J."/>
            <person name="Temple L.M."/>
        </authorList>
    </citation>
    <scope>NUCLEOTIDE SEQUENCE [LARGE SCALE GENOMIC DNA]</scope>
    <source>
        <strain>197N</strain>
    </source>
</reference>
<protein>
    <recommendedName>
        <fullName evidence="1">Potassium-transporting ATPase potassium-binding subunit</fullName>
    </recommendedName>
    <alternativeName>
        <fullName evidence="1">ATP phosphohydrolase [potassium-transporting] A chain</fullName>
    </alternativeName>
    <alternativeName>
        <fullName evidence="1">Potassium-binding and translocating subunit A</fullName>
    </alternativeName>
    <alternativeName>
        <fullName evidence="1">Potassium-translocating ATPase A chain</fullName>
    </alternativeName>
</protein>
<evidence type="ECO:0000255" key="1">
    <source>
        <dbReference type="HAMAP-Rule" id="MF_00275"/>
    </source>
</evidence>
<proteinExistence type="inferred from homology"/>
<gene>
    <name evidence="1" type="primary">kdpA</name>
    <name type="ordered locus">BAV2701</name>
</gene>
<dbReference type="EMBL" id="AM167904">
    <property type="protein sequence ID" value="CAJ50312.1"/>
    <property type="molecule type" value="Genomic_DNA"/>
</dbReference>
<dbReference type="RefSeq" id="WP_012418343.1">
    <property type="nucleotide sequence ID" value="NC_010645.1"/>
</dbReference>
<dbReference type="SMR" id="Q2KWC8"/>
<dbReference type="STRING" id="360910.BAV2701"/>
<dbReference type="KEGG" id="bav:BAV2701"/>
<dbReference type="eggNOG" id="COG2060">
    <property type="taxonomic scope" value="Bacteria"/>
</dbReference>
<dbReference type="HOGENOM" id="CLU_018614_3_0_4"/>
<dbReference type="OrthoDB" id="9763796at2"/>
<dbReference type="Proteomes" id="UP000001977">
    <property type="component" value="Chromosome"/>
</dbReference>
<dbReference type="GO" id="GO:0005886">
    <property type="term" value="C:plasma membrane"/>
    <property type="evidence" value="ECO:0007669"/>
    <property type="project" value="UniProtKB-SubCell"/>
</dbReference>
<dbReference type="GO" id="GO:0008556">
    <property type="term" value="F:P-type potassium transmembrane transporter activity"/>
    <property type="evidence" value="ECO:0007669"/>
    <property type="project" value="InterPro"/>
</dbReference>
<dbReference type="GO" id="GO:0030955">
    <property type="term" value="F:potassium ion binding"/>
    <property type="evidence" value="ECO:0007669"/>
    <property type="project" value="UniProtKB-UniRule"/>
</dbReference>
<dbReference type="HAMAP" id="MF_00275">
    <property type="entry name" value="KdpA"/>
    <property type="match status" value="1"/>
</dbReference>
<dbReference type="InterPro" id="IPR004623">
    <property type="entry name" value="KdpA"/>
</dbReference>
<dbReference type="NCBIfam" id="TIGR00680">
    <property type="entry name" value="kdpA"/>
    <property type="match status" value="1"/>
</dbReference>
<dbReference type="PANTHER" id="PTHR30607">
    <property type="entry name" value="POTASSIUM-TRANSPORTING ATPASE A CHAIN"/>
    <property type="match status" value="1"/>
</dbReference>
<dbReference type="PANTHER" id="PTHR30607:SF2">
    <property type="entry name" value="POTASSIUM-TRANSPORTING ATPASE POTASSIUM-BINDING SUBUNIT"/>
    <property type="match status" value="1"/>
</dbReference>
<dbReference type="Pfam" id="PF03814">
    <property type="entry name" value="KdpA"/>
    <property type="match status" value="1"/>
</dbReference>
<dbReference type="PIRSF" id="PIRSF001294">
    <property type="entry name" value="K_ATPaseA"/>
    <property type="match status" value="1"/>
</dbReference>
<name>KDPA_BORA1</name>
<sequence length="594" mass="62631">MDSQFFGLLVFYLAILLILAPFLGRYIRRAMEDEHYAATAWGRWLERLMYRLSGVNPAAEMTWRQYAVAVLIFSVLGFIAVYALQRLQGFLPLNPVGLGAVSPDSAFNTAISFVSNTNWQGYSPESTMSYLTQMLALTVQNFLSAAVGMSVLFALIRGFARHGCATVGNFWVDATRATLYVLLPLALALALALVSQGVIQNTAAYQEVTTLQAQSYEQARLDSTGQPMMDAAGKPLTETLVIQTQTLAMGPTASQEAIKLLGINGGGFFNANSAHPYENPTGLSNLLEMLAILIIPAALCFTFGEMVGDRRQGVAILAAMTLLFVGLAWLTQNAEQALTPALSHLSADGLLGNMEGKESRFGVAASALFAVVTTAASCGAVNTMHDSLSAMGGLGPMLLMQLGEVVFGGVGSGLYGMLAFALLGVFIAGLMIGRTPEYLGKKIEAFDMKMVSIAILVTPFLVLAGTALAVSVPQGLAGMLNPGAHGFSEVLYALSSAANNNGSAFAGLSSNTPFYNSLLGLAMWFGRFLVIVAILALAGSLAGKRRLAQSPGSMPTTGPLFIVLLIGTVLLVGALTYVPALALGPVAEHLQARP</sequence>
<organism>
    <name type="scientific">Bordetella avium (strain 197N)</name>
    <dbReference type="NCBI Taxonomy" id="360910"/>
    <lineage>
        <taxon>Bacteria</taxon>
        <taxon>Pseudomonadati</taxon>
        <taxon>Pseudomonadota</taxon>
        <taxon>Betaproteobacteria</taxon>
        <taxon>Burkholderiales</taxon>
        <taxon>Alcaligenaceae</taxon>
        <taxon>Bordetella</taxon>
    </lineage>
</organism>
<accession>Q2KWC8</accession>
<comment type="function">
    <text evidence="1">Part of the high-affinity ATP-driven potassium transport (or Kdp) system, which catalyzes the hydrolysis of ATP coupled with the electrogenic transport of potassium into the cytoplasm. This subunit binds the periplasmic potassium ions and delivers the ions to the membrane domain of KdpB through an intramembrane tunnel.</text>
</comment>
<comment type="subunit">
    <text evidence="1">The system is composed of three essential subunits: KdpA, KdpB and KdpC.</text>
</comment>
<comment type="subcellular location">
    <subcellularLocation>
        <location evidence="1">Cell inner membrane</location>
        <topology evidence="1">Multi-pass membrane protein</topology>
    </subcellularLocation>
</comment>
<comment type="similarity">
    <text evidence="1">Belongs to the KdpA family.</text>
</comment>
<keyword id="KW-0997">Cell inner membrane</keyword>
<keyword id="KW-1003">Cell membrane</keyword>
<keyword id="KW-0406">Ion transport</keyword>
<keyword id="KW-0472">Membrane</keyword>
<keyword id="KW-0630">Potassium</keyword>
<keyword id="KW-0633">Potassium transport</keyword>
<keyword id="KW-1185">Reference proteome</keyword>
<keyword id="KW-0812">Transmembrane</keyword>
<keyword id="KW-1133">Transmembrane helix</keyword>
<keyword id="KW-0813">Transport</keyword>
<feature type="chain" id="PRO_1000022214" description="Potassium-transporting ATPase potassium-binding subunit">
    <location>
        <begin position="1"/>
        <end position="594"/>
    </location>
</feature>
<feature type="transmembrane region" description="Helical" evidence="1">
    <location>
        <begin position="4"/>
        <end position="24"/>
    </location>
</feature>
<feature type="transmembrane region" description="Helical" evidence="1">
    <location>
        <begin position="65"/>
        <end position="85"/>
    </location>
</feature>
<feature type="transmembrane region" description="Helical" evidence="1">
    <location>
        <begin position="136"/>
        <end position="156"/>
    </location>
</feature>
<feature type="transmembrane region" description="Helical" evidence="1">
    <location>
        <begin position="179"/>
        <end position="199"/>
    </location>
</feature>
<feature type="transmembrane region" description="Helical" evidence="1">
    <location>
        <begin position="287"/>
        <end position="307"/>
    </location>
</feature>
<feature type="transmembrane region" description="Helical" evidence="1">
    <location>
        <begin position="314"/>
        <end position="334"/>
    </location>
</feature>
<feature type="transmembrane region" description="Helical" evidence="1">
    <location>
        <begin position="361"/>
        <end position="381"/>
    </location>
</feature>
<feature type="transmembrane region" description="Helical" evidence="1">
    <location>
        <begin position="390"/>
        <end position="410"/>
    </location>
</feature>
<feature type="transmembrane region" description="Helical" evidence="1">
    <location>
        <begin position="413"/>
        <end position="433"/>
    </location>
</feature>
<feature type="transmembrane region" description="Helical" evidence="1">
    <location>
        <begin position="450"/>
        <end position="470"/>
    </location>
</feature>
<feature type="transmembrane region" description="Helical" evidence="1">
    <location>
        <begin position="518"/>
        <end position="538"/>
    </location>
</feature>
<feature type="transmembrane region" description="Helical" evidence="1">
    <location>
        <begin position="560"/>
        <end position="580"/>
    </location>
</feature>